<accession>B7NTG7</accession>
<dbReference type="EC" id="1.1.1.86" evidence="1"/>
<dbReference type="EMBL" id="CU928164">
    <property type="protein sequence ID" value="CAR19131.1"/>
    <property type="molecule type" value="Genomic_DNA"/>
</dbReference>
<dbReference type="RefSeq" id="WP_012602480.1">
    <property type="nucleotide sequence ID" value="NC_011750.1"/>
</dbReference>
<dbReference type="RefSeq" id="YP_002408941.1">
    <property type="nucleotide sequence ID" value="NC_011750.1"/>
</dbReference>
<dbReference type="SMR" id="B7NTG7"/>
<dbReference type="STRING" id="585057.ECIAI39_3012"/>
<dbReference type="KEGG" id="ect:ECIAI39_3012"/>
<dbReference type="PATRIC" id="fig|585057.6.peg.3124"/>
<dbReference type="HOGENOM" id="CLU_551905_0_0_6"/>
<dbReference type="UniPathway" id="UPA00047">
    <property type="reaction ID" value="UER00056"/>
</dbReference>
<dbReference type="UniPathway" id="UPA00049">
    <property type="reaction ID" value="UER00060"/>
</dbReference>
<dbReference type="Proteomes" id="UP000000749">
    <property type="component" value="Chromosome"/>
</dbReference>
<dbReference type="GO" id="GO:0005829">
    <property type="term" value="C:cytosol"/>
    <property type="evidence" value="ECO:0007669"/>
    <property type="project" value="TreeGrafter"/>
</dbReference>
<dbReference type="GO" id="GO:0004455">
    <property type="term" value="F:ketol-acid reductoisomerase activity"/>
    <property type="evidence" value="ECO:0007669"/>
    <property type="project" value="UniProtKB-UniRule"/>
</dbReference>
<dbReference type="GO" id="GO:0000287">
    <property type="term" value="F:magnesium ion binding"/>
    <property type="evidence" value="ECO:0007669"/>
    <property type="project" value="UniProtKB-UniRule"/>
</dbReference>
<dbReference type="GO" id="GO:0009097">
    <property type="term" value="P:isoleucine biosynthetic process"/>
    <property type="evidence" value="ECO:0007669"/>
    <property type="project" value="UniProtKB-UniRule"/>
</dbReference>
<dbReference type="GO" id="GO:0009099">
    <property type="term" value="P:L-valine biosynthetic process"/>
    <property type="evidence" value="ECO:0007669"/>
    <property type="project" value="UniProtKB-UniRule"/>
</dbReference>
<dbReference type="FunFam" id="1.10.1040.10:FF:000007">
    <property type="entry name" value="Ketol-acid reductoisomerase (NADP(+))"/>
    <property type="match status" value="1"/>
</dbReference>
<dbReference type="FunFam" id="3.40.50.720:FF:000043">
    <property type="entry name" value="Ketol-acid reductoisomerase (NADP(+))"/>
    <property type="match status" value="1"/>
</dbReference>
<dbReference type="Gene3D" id="1.10.1040.10">
    <property type="entry name" value="N-(1-d-carboxylethyl)-l-norvaline Dehydrogenase, domain 2"/>
    <property type="match status" value="1"/>
</dbReference>
<dbReference type="Gene3D" id="3.40.50.720">
    <property type="entry name" value="NAD(P)-binding Rossmann-like Domain"/>
    <property type="match status" value="1"/>
</dbReference>
<dbReference type="HAMAP" id="MF_00435">
    <property type="entry name" value="IlvC"/>
    <property type="match status" value="1"/>
</dbReference>
<dbReference type="InterPro" id="IPR008927">
    <property type="entry name" value="6-PGluconate_DH-like_C_sf"/>
</dbReference>
<dbReference type="InterPro" id="IPR013328">
    <property type="entry name" value="6PGD_dom2"/>
</dbReference>
<dbReference type="InterPro" id="IPR013023">
    <property type="entry name" value="KARI"/>
</dbReference>
<dbReference type="InterPro" id="IPR000506">
    <property type="entry name" value="KARI_C"/>
</dbReference>
<dbReference type="InterPro" id="IPR013116">
    <property type="entry name" value="KARI_N"/>
</dbReference>
<dbReference type="InterPro" id="IPR036291">
    <property type="entry name" value="NAD(P)-bd_dom_sf"/>
</dbReference>
<dbReference type="NCBIfam" id="TIGR00465">
    <property type="entry name" value="ilvC"/>
    <property type="match status" value="1"/>
</dbReference>
<dbReference type="NCBIfam" id="NF003557">
    <property type="entry name" value="PRK05225.1"/>
    <property type="match status" value="1"/>
</dbReference>
<dbReference type="PANTHER" id="PTHR21371">
    <property type="entry name" value="KETOL-ACID REDUCTOISOMERASE, MITOCHONDRIAL"/>
    <property type="match status" value="1"/>
</dbReference>
<dbReference type="PANTHER" id="PTHR21371:SF1">
    <property type="entry name" value="KETOL-ACID REDUCTOISOMERASE, MITOCHONDRIAL"/>
    <property type="match status" value="1"/>
</dbReference>
<dbReference type="Pfam" id="PF01450">
    <property type="entry name" value="KARI_C"/>
    <property type="match status" value="2"/>
</dbReference>
<dbReference type="Pfam" id="PF07991">
    <property type="entry name" value="KARI_N"/>
    <property type="match status" value="1"/>
</dbReference>
<dbReference type="SUPFAM" id="SSF48179">
    <property type="entry name" value="6-phosphogluconate dehydrogenase C-terminal domain-like"/>
    <property type="match status" value="2"/>
</dbReference>
<dbReference type="SUPFAM" id="SSF51735">
    <property type="entry name" value="NAD(P)-binding Rossmann-fold domains"/>
    <property type="match status" value="1"/>
</dbReference>
<dbReference type="PROSITE" id="PS51851">
    <property type="entry name" value="KARI_C"/>
    <property type="match status" value="2"/>
</dbReference>
<dbReference type="PROSITE" id="PS51850">
    <property type="entry name" value="KARI_N"/>
    <property type="match status" value="1"/>
</dbReference>
<name>ILVC_ECO7I</name>
<keyword id="KW-0028">Amino-acid biosynthesis</keyword>
<keyword id="KW-0100">Branched-chain amino acid biosynthesis</keyword>
<keyword id="KW-0460">Magnesium</keyword>
<keyword id="KW-0479">Metal-binding</keyword>
<keyword id="KW-0521">NADP</keyword>
<keyword id="KW-0560">Oxidoreductase</keyword>
<keyword id="KW-0677">Repeat</keyword>
<reference key="1">
    <citation type="journal article" date="2009" name="PLoS Genet.">
        <title>Organised genome dynamics in the Escherichia coli species results in highly diverse adaptive paths.</title>
        <authorList>
            <person name="Touchon M."/>
            <person name="Hoede C."/>
            <person name="Tenaillon O."/>
            <person name="Barbe V."/>
            <person name="Baeriswyl S."/>
            <person name="Bidet P."/>
            <person name="Bingen E."/>
            <person name="Bonacorsi S."/>
            <person name="Bouchier C."/>
            <person name="Bouvet O."/>
            <person name="Calteau A."/>
            <person name="Chiapello H."/>
            <person name="Clermont O."/>
            <person name="Cruveiller S."/>
            <person name="Danchin A."/>
            <person name="Diard M."/>
            <person name="Dossat C."/>
            <person name="Karoui M.E."/>
            <person name="Frapy E."/>
            <person name="Garry L."/>
            <person name="Ghigo J.M."/>
            <person name="Gilles A.M."/>
            <person name="Johnson J."/>
            <person name="Le Bouguenec C."/>
            <person name="Lescat M."/>
            <person name="Mangenot S."/>
            <person name="Martinez-Jehanne V."/>
            <person name="Matic I."/>
            <person name="Nassif X."/>
            <person name="Oztas S."/>
            <person name="Petit M.A."/>
            <person name="Pichon C."/>
            <person name="Rouy Z."/>
            <person name="Ruf C.S."/>
            <person name="Schneider D."/>
            <person name="Tourret J."/>
            <person name="Vacherie B."/>
            <person name="Vallenet D."/>
            <person name="Medigue C."/>
            <person name="Rocha E.P.C."/>
            <person name="Denamur E."/>
        </authorList>
    </citation>
    <scope>NUCLEOTIDE SEQUENCE [LARGE SCALE GENOMIC DNA]</scope>
    <source>
        <strain>IAI39 / ExPEC</strain>
    </source>
</reference>
<sequence>MANYFNTLNLRQQLAQLGKCRFMGRDEFADGASYLQGKKVVIVGCGAQGLNQGLNMRDSGLDISYALRKEAIAEKRASWRKATENGFKVGTYEELIPQADLVVNLTPDKQHSDVVHTVQPLMKDGAALGYSHGFNIVEVGEQIRKDITVVMVAPKCPGTEVREEYKRGFGVPTLIAVHPENDPKGEGMAIAKAWAAATGGHRAGVLESSFVAEVKSDLMGEQTILCGMLQAGSLLCFDRLVEEGTDPAYAEKLIQFGWETITEALKQGGITLMMDRLSNPAKLRAYALSEQLKEIMAPLFQKHMDDIISGEFSSGMMADWANDDKKLLTWREETGKTAFETAPQYEGKIGEQEYFDKGVLMIAMVKAGVELAFETMVDSGIIEESAYYESLHELPLIANTIARKRLYEMNVVISDTAEYGNYLFSYACVPLLKPFMAELQPGDLGKAIPEGAVDNAQLRDVNEAIRSHAIEQVGKKLRGYMTDMKRIAVAG</sequence>
<protein>
    <recommendedName>
        <fullName evidence="1">Ketol-acid reductoisomerase (NADP(+))</fullName>
        <shortName evidence="1">KARI</shortName>
        <ecNumber evidence="1">1.1.1.86</ecNumber>
    </recommendedName>
    <alternativeName>
        <fullName evidence="1">Acetohydroxy-acid isomeroreductase</fullName>
        <shortName evidence="1">AHIR</shortName>
    </alternativeName>
    <alternativeName>
        <fullName evidence="1">Alpha-keto-beta-hydroxylacyl reductoisomerase</fullName>
    </alternativeName>
    <alternativeName>
        <fullName evidence="1">Ketol-acid reductoisomerase type 2</fullName>
    </alternativeName>
    <alternativeName>
        <fullName evidence="1">Ketol-acid reductoisomerase type II</fullName>
    </alternativeName>
</protein>
<comment type="function">
    <text evidence="1">Involved in the biosynthesis of branched-chain amino acids (BCAA). Catalyzes an alkyl-migration followed by a ketol-acid reduction of (S)-2-acetolactate (S2AL) to yield (R)-2,3-dihydroxy-isovalerate. In the isomerase reaction, S2AL is rearranged via a Mg-dependent methyl migration to produce 3-hydroxy-3-methyl-2-ketobutyrate (HMKB). In the reductase reaction, this 2-ketoacid undergoes a metal-dependent reduction by NADPH to yield (R)-2,3-dihydroxy-isovalerate.</text>
</comment>
<comment type="catalytic activity">
    <reaction evidence="1">
        <text>(2R)-2,3-dihydroxy-3-methylbutanoate + NADP(+) = (2S)-2-acetolactate + NADPH + H(+)</text>
        <dbReference type="Rhea" id="RHEA:22068"/>
        <dbReference type="ChEBI" id="CHEBI:15378"/>
        <dbReference type="ChEBI" id="CHEBI:49072"/>
        <dbReference type="ChEBI" id="CHEBI:57783"/>
        <dbReference type="ChEBI" id="CHEBI:58349"/>
        <dbReference type="ChEBI" id="CHEBI:58476"/>
        <dbReference type="EC" id="1.1.1.86"/>
    </reaction>
</comment>
<comment type="catalytic activity">
    <reaction evidence="1">
        <text>(2R,3R)-2,3-dihydroxy-3-methylpentanoate + NADP(+) = (S)-2-ethyl-2-hydroxy-3-oxobutanoate + NADPH + H(+)</text>
        <dbReference type="Rhea" id="RHEA:13493"/>
        <dbReference type="ChEBI" id="CHEBI:15378"/>
        <dbReference type="ChEBI" id="CHEBI:49256"/>
        <dbReference type="ChEBI" id="CHEBI:49258"/>
        <dbReference type="ChEBI" id="CHEBI:57783"/>
        <dbReference type="ChEBI" id="CHEBI:58349"/>
        <dbReference type="EC" id="1.1.1.86"/>
    </reaction>
</comment>
<comment type="cofactor">
    <cofactor evidence="1">
        <name>Mg(2+)</name>
        <dbReference type="ChEBI" id="CHEBI:18420"/>
    </cofactor>
    <text evidence="1">Binds 2 magnesium ions per subunit.</text>
</comment>
<comment type="pathway">
    <text evidence="1">Amino-acid biosynthesis; L-isoleucine biosynthesis; L-isoleucine from 2-oxobutanoate: step 2/4.</text>
</comment>
<comment type="pathway">
    <text evidence="1">Amino-acid biosynthesis; L-valine biosynthesis; L-valine from pyruvate: step 2/4.</text>
</comment>
<comment type="similarity">
    <text evidence="1">Belongs to the ketol-acid reductoisomerase family.</text>
</comment>
<evidence type="ECO:0000255" key="1">
    <source>
        <dbReference type="HAMAP-Rule" id="MF_00435"/>
    </source>
</evidence>
<evidence type="ECO:0000255" key="2">
    <source>
        <dbReference type="PROSITE-ProRule" id="PRU01197"/>
    </source>
</evidence>
<evidence type="ECO:0000255" key="3">
    <source>
        <dbReference type="PROSITE-ProRule" id="PRU01198"/>
    </source>
</evidence>
<gene>
    <name evidence="1" type="primary">ilvC</name>
    <name type="ordered locus">ECIAI39_3012</name>
</gene>
<feature type="chain" id="PRO_1000190961" description="Ketol-acid reductoisomerase (NADP(+))">
    <location>
        <begin position="1"/>
        <end position="491"/>
    </location>
</feature>
<feature type="domain" description="KARI N-terminal Rossmann" evidence="2">
    <location>
        <begin position="15"/>
        <end position="208"/>
    </location>
</feature>
<feature type="domain" description="KARI C-terminal knotted 1" evidence="3">
    <location>
        <begin position="209"/>
        <end position="344"/>
    </location>
</feature>
<feature type="domain" description="KARI C-terminal knotted 2" evidence="3">
    <location>
        <begin position="345"/>
        <end position="484"/>
    </location>
</feature>
<feature type="active site" evidence="1">
    <location>
        <position position="132"/>
    </location>
</feature>
<feature type="binding site" evidence="1">
    <location>
        <begin position="45"/>
        <end position="48"/>
    </location>
    <ligand>
        <name>NADP(+)</name>
        <dbReference type="ChEBI" id="CHEBI:58349"/>
    </ligand>
</feature>
<feature type="binding site" evidence="1">
    <location>
        <position position="68"/>
    </location>
    <ligand>
        <name>NADP(+)</name>
        <dbReference type="ChEBI" id="CHEBI:58349"/>
    </ligand>
</feature>
<feature type="binding site" evidence="1">
    <location>
        <position position="76"/>
    </location>
    <ligand>
        <name>NADP(+)</name>
        <dbReference type="ChEBI" id="CHEBI:58349"/>
    </ligand>
</feature>
<feature type="binding site" evidence="1">
    <location>
        <position position="78"/>
    </location>
    <ligand>
        <name>NADP(+)</name>
        <dbReference type="ChEBI" id="CHEBI:58349"/>
    </ligand>
</feature>
<feature type="binding site" evidence="1">
    <location>
        <begin position="108"/>
        <end position="110"/>
    </location>
    <ligand>
        <name>NADP(+)</name>
        <dbReference type="ChEBI" id="CHEBI:58349"/>
    </ligand>
</feature>
<feature type="binding site" evidence="1">
    <location>
        <position position="158"/>
    </location>
    <ligand>
        <name>NADP(+)</name>
        <dbReference type="ChEBI" id="CHEBI:58349"/>
    </ligand>
</feature>
<feature type="binding site" evidence="1">
    <location>
        <position position="217"/>
    </location>
    <ligand>
        <name>Mg(2+)</name>
        <dbReference type="ChEBI" id="CHEBI:18420"/>
        <label>1</label>
    </ligand>
</feature>
<feature type="binding site" evidence="1">
    <location>
        <position position="217"/>
    </location>
    <ligand>
        <name>Mg(2+)</name>
        <dbReference type="ChEBI" id="CHEBI:18420"/>
        <label>2</label>
    </ligand>
</feature>
<feature type="binding site" evidence="1">
    <location>
        <position position="221"/>
    </location>
    <ligand>
        <name>Mg(2+)</name>
        <dbReference type="ChEBI" id="CHEBI:18420"/>
        <label>1</label>
    </ligand>
</feature>
<feature type="binding site" evidence="1">
    <location>
        <position position="389"/>
    </location>
    <ligand>
        <name>Mg(2+)</name>
        <dbReference type="ChEBI" id="CHEBI:18420"/>
        <label>2</label>
    </ligand>
</feature>
<feature type="binding site" evidence="1">
    <location>
        <position position="393"/>
    </location>
    <ligand>
        <name>Mg(2+)</name>
        <dbReference type="ChEBI" id="CHEBI:18420"/>
        <label>2</label>
    </ligand>
</feature>
<feature type="binding site" evidence="1">
    <location>
        <position position="414"/>
    </location>
    <ligand>
        <name>substrate</name>
    </ligand>
</feature>
<organism>
    <name type="scientific">Escherichia coli O7:K1 (strain IAI39 / ExPEC)</name>
    <dbReference type="NCBI Taxonomy" id="585057"/>
    <lineage>
        <taxon>Bacteria</taxon>
        <taxon>Pseudomonadati</taxon>
        <taxon>Pseudomonadota</taxon>
        <taxon>Gammaproteobacteria</taxon>
        <taxon>Enterobacterales</taxon>
        <taxon>Enterobacteriaceae</taxon>
        <taxon>Escherichia</taxon>
    </lineage>
</organism>
<proteinExistence type="inferred from homology"/>